<keyword id="KW-0028">Amino-acid biosynthesis</keyword>
<keyword id="KW-0963">Cytoplasm</keyword>
<keyword id="KW-0368">Histidine biosynthesis</keyword>
<keyword id="KW-0456">Lyase</keyword>
<protein>
    <recommendedName>
        <fullName evidence="1">Imidazoleglycerol-phosphate dehydratase</fullName>
        <shortName evidence="1">IGPD</shortName>
        <ecNumber evidence="1">4.2.1.19</ecNumber>
    </recommendedName>
</protein>
<name>HIS7_BACC3</name>
<organism>
    <name type="scientific">Bacillus cereus (strain 03BB102)</name>
    <dbReference type="NCBI Taxonomy" id="572264"/>
    <lineage>
        <taxon>Bacteria</taxon>
        <taxon>Bacillati</taxon>
        <taxon>Bacillota</taxon>
        <taxon>Bacilli</taxon>
        <taxon>Bacillales</taxon>
        <taxon>Bacillaceae</taxon>
        <taxon>Bacillus</taxon>
        <taxon>Bacillus cereus group</taxon>
    </lineage>
</organism>
<accession>C1EMQ4</accession>
<reference key="1">
    <citation type="submission" date="2009-02" db="EMBL/GenBank/DDBJ databases">
        <title>Genome sequence of Bacillus cereus 03BB102.</title>
        <authorList>
            <person name="Dodson R.J."/>
            <person name="Jackson P."/>
            <person name="Munk A.C."/>
            <person name="Brettin T."/>
            <person name="Bruce D."/>
            <person name="Detter C."/>
            <person name="Tapia R."/>
            <person name="Han C."/>
            <person name="Sutton G."/>
            <person name="Sims D."/>
        </authorList>
    </citation>
    <scope>NUCLEOTIDE SEQUENCE [LARGE SCALE GENOMIC DNA]</scope>
    <source>
        <strain>03BB102</strain>
    </source>
</reference>
<proteinExistence type="inferred from homology"/>
<evidence type="ECO:0000255" key="1">
    <source>
        <dbReference type="HAMAP-Rule" id="MF_00076"/>
    </source>
</evidence>
<dbReference type="EC" id="4.2.1.19" evidence="1"/>
<dbReference type="EMBL" id="CP001407">
    <property type="protein sequence ID" value="ACO30788.1"/>
    <property type="molecule type" value="Genomic_DNA"/>
</dbReference>
<dbReference type="RefSeq" id="WP_001209297.1">
    <property type="nucleotide sequence ID" value="NZ_CP009318.1"/>
</dbReference>
<dbReference type="SMR" id="C1EMQ4"/>
<dbReference type="KEGG" id="bcx:BCA_1462"/>
<dbReference type="PATRIC" id="fig|572264.18.peg.1412"/>
<dbReference type="UniPathway" id="UPA00031">
    <property type="reaction ID" value="UER00011"/>
</dbReference>
<dbReference type="Proteomes" id="UP000002210">
    <property type="component" value="Chromosome"/>
</dbReference>
<dbReference type="GO" id="GO:0005737">
    <property type="term" value="C:cytoplasm"/>
    <property type="evidence" value="ECO:0007669"/>
    <property type="project" value="UniProtKB-SubCell"/>
</dbReference>
<dbReference type="GO" id="GO:0004424">
    <property type="term" value="F:imidazoleglycerol-phosphate dehydratase activity"/>
    <property type="evidence" value="ECO:0007669"/>
    <property type="project" value="UniProtKB-UniRule"/>
</dbReference>
<dbReference type="GO" id="GO:0000105">
    <property type="term" value="P:L-histidine biosynthetic process"/>
    <property type="evidence" value="ECO:0007669"/>
    <property type="project" value="UniProtKB-UniRule"/>
</dbReference>
<dbReference type="CDD" id="cd07914">
    <property type="entry name" value="IGPD"/>
    <property type="match status" value="1"/>
</dbReference>
<dbReference type="FunFam" id="3.30.230.40:FF:000001">
    <property type="entry name" value="Imidazoleglycerol-phosphate dehydratase HisB"/>
    <property type="match status" value="1"/>
</dbReference>
<dbReference type="FunFam" id="3.30.230.40:FF:000003">
    <property type="entry name" value="Imidazoleglycerol-phosphate dehydratase HisB"/>
    <property type="match status" value="1"/>
</dbReference>
<dbReference type="Gene3D" id="3.30.230.40">
    <property type="entry name" value="Imidazole glycerol phosphate dehydratase, domain 1"/>
    <property type="match status" value="2"/>
</dbReference>
<dbReference type="HAMAP" id="MF_00076">
    <property type="entry name" value="HisB"/>
    <property type="match status" value="1"/>
</dbReference>
<dbReference type="InterPro" id="IPR038494">
    <property type="entry name" value="IGPD_sf"/>
</dbReference>
<dbReference type="InterPro" id="IPR000807">
    <property type="entry name" value="ImidazoleglycerolP_deHydtase"/>
</dbReference>
<dbReference type="InterPro" id="IPR020565">
    <property type="entry name" value="ImidazoleglycerP_deHydtase_CS"/>
</dbReference>
<dbReference type="InterPro" id="IPR020568">
    <property type="entry name" value="Ribosomal_Su5_D2-typ_SF"/>
</dbReference>
<dbReference type="NCBIfam" id="NF002107">
    <property type="entry name" value="PRK00951.1-2"/>
    <property type="match status" value="1"/>
</dbReference>
<dbReference type="NCBIfam" id="NF002111">
    <property type="entry name" value="PRK00951.2-1"/>
    <property type="match status" value="1"/>
</dbReference>
<dbReference type="NCBIfam" id="NF002114">
    <property type="entry name" value="PRK00951.2-4"/>
    <property type="match status" value="1"/>
</dbReference>
<dbReference type="PANTHER" id="PTHR23133:SF2">
    <property type="entry name" value="IMIDAZOLEGLYCEROL-PHOSPHATE DEHYDRATASE"/>
    <property type="match status" value="1"/>
</dbReference>
<dbReference type="PANTHER" id="PTHR23133">
    <property type="entry name" value="IMIDAZOLEGLYCEROL-PHOSPHATE DEHYDRATASE HIS7"/>
    <property type="match status" value="1"/>
</dbReference>
<dbReference type="Pfam" id="PF00475">
    <property type="entry name" value="IGPD"/>
    <property type="match status" value="1"/>
</dbReference>
<dbReference type="SUPFAM" id="SSF54211">
    <property type="entry name" value="Ribosomal protein S5 domain 2-like"/>
    <property type="match status" value="2"/>
</dbReference>
<dbReference type="PROSITE" id="PS00954">
    <property type="entry name" value="IGP_DEHYDRATASE_1"/>
    <property type="match status" value="1"/>
</dbReference>
<dbReference type="PROSITE" id="PS00955">
    <property type="entry name" value="IGP_DEHYDRATASE_2"/>
    <property type="match status" value="1"/>
</dbReference>
<sequence length="194" mass="21539">MRESSQIRETTETKIKLSLQLDEGKNVSVQTGVGFFDHMLTLFARHGRFGLQVEAEGDVFVDAHHTVEDVGIVLGNCLKEALQNKEGINRYGSAYVPMDESLGFVAIDISGRSYIVFQGELTNPKLGDFDTELTEEFFRAVAHTANITLHARILYGSNTHHKIEALFKAFGRALREAVERNAHITGVNSTKGML</sequence>
<comment type="catalytic activity">
    <reaction evidence="1">
        <text>D-erythro-1-(imidazol-4-yl)glycerol 3-phosphate = 3-(imidazol-4-yl)-2-oxopropyl phosphate + H2O</text>
        <dbReference type="Rhea" id="RHEA:11040"/>
        <dbReference type="ChEBI" id="CHEBI:15377"/>
        <dbReference type="ChEBI" id="CHEBI:57766"/>
        <dbReference type="ChEBI" id="CHEBI:58278"/>
        <dbReference type="EC" id="4.2.1.19"/>
    </reaction>
</comment>
<comment type="pathway">
    <text evidence="1">Amino-acid biosynthesis; L-histidine biosynthesis; L-histidine from 5-phospho-alpha-D-ribose 1-diphosphate: step 6/9.</text>
</comment>
<comment type="subcellular location">
    <subcellularLocation>
        <location evidence="1">Cytoplasm</location>
    </subcellularLocation>
</comment>
<comment type="similarity">
    <text evidence="1">Belongs to the imidazoleglycerol-phosphate dehydratase family.</text>
</comment>
<gene>
    <name evidence="1" type="primary">hisB</name>
    <name type="ordered locus">BCA_1462</name>
</gene>
<feature type="chain" id="PRO_1000118214" description="Imidazoleglycerol-phosphate dehydratase">
    <location>
        <begin position="1"/>
        <end position="194"/>
    </location>
</feature>